<evidence type="ECO:0000250" key="1">
    <source>
        <dbReference type="UniProtKB" id="Q9X759"/>
    </source>
</evidence>
<evidence type="ECO:0000256" key="2">
    <source>
        <dbReference type="SAM" id="MobiDB-lite"/>
    </source>
</evidence>
<evidence type="ECO:0000269" key="3">
    <source>
    </source>
</evidence>
<evidence type="ECO:0000269" key="4">
    <source ref="4"/>
</evidence>
<evidence type="ECO:0000303" key="5">
    <source>
    </source>
</evidence>
<evidence type="ECO:0000305" key="6"/>
<evidence type="ECO:0000305" key="7">
    <source>
    </source>
</evidence>
<evidence type="ECO:0000305" key="8">
    <source ref="4"/>
</evidence>
<evidence type="ECO:0000312" key="9">
    <source>
        <dbReference type="EMBL" id="AAO76703.1"/>
    </source>
</evidence>
<evidence type="ECO:0007744" key="10">
    <source>
        <dbReference type="PDB" id="3B5Q"/>
    </source>
</evidence>
<evidence type="ECO:0007744" key="11">
    <source>
        <dbReference type="PDB" id="5G2T"/>
    </source>
</evidence>
<evidence type="ECO:0007744" key="12">
    <source>
        <dbReference type="PDB" id="5G2U"/>
    </source>
</evidence>
<evidence type="ECO:0007829" key="13">
    <source>
        <dbReference type="PDB" id="5G2U"/>
    </source>
</evidence>
<organism>
    <name type="scientific">Bacteroides thetaiotaomicron (strain ATCC 29148 / DSM 2079 / JCM 5827 / CCUG 10774 / NCTC 10582 / VPI-5482 / E50)</name>
    <dbReference type="NCBI Taxonomy" id="226186"/>
    <lineage>
        <taxon>Bacteria</taxon>
        <taxon>Pseudomonadati</taxon>
        <taxon>Bacteroidota</taxon>
        <taxon>Bacteroidia</taxon>
        <taxon>Bacteroidales</taxon>
        <taxon>Bacteroidaceae</taxon>
        <taxon>Bacteroides</taxon>
    </lineage>
</organism>
<dbReference type="EC" id="3.1.6.-" evidence="3"/>
<dbReference type="EMBL" id="AE015928">
    <property type="protein sequence ID" value="AAO76703.1"/>
    <property type="molecule type" value="Genomic_DNA"/>
</dbReference>
<dbReference type="RefSeq" id="NP_810509.1">
    <property type="nucleotide sequence ID" value="NC_004663.1"/>
</dbReference>
<dbReference type="PDB" id="3B5Q">
    <property type="method" value="X-ray"/>
    <property type="resolution" value="2.40 A"/>
    <property type="chains" value="A/B=1-481"/>
</dbReference>
<dbReference type="PDB" id="5G2T">
    <property type="method" value="X-ray"/>
    <property type="resolution" value="1.90 A"/>
    <property type="chains" value="A/B/C/D=13-481"/>
</dbReference>
<dbReference type="PDB" id="5G2U">
    <property type="method" value="X-ray"/>
    <property type="resolution" value="1.43 A"/>
    <property type="chains" value="A=13-481"/>
</dbReference>
<dbReference type="PDBsum" id="3B5Q"/>
<dbReference type="PDBsum" id="5G2T"/>
<dbReference type="PDBsum" id="5G2U"/>
<dbReference type="SMR" id="Q8A7C8"/>
<dbReference type="STRING" id="226186.BT_1596"/>
<dbReference type="PaxDb" id="226186-BT_1596"/>
<dbReference type="DNASU" id="1075809"/>
<dbReference type="EnsemblBacteria" id="AAO76703">
    <property type="protein sequence ID" value="AAO76703"/>
    <property type="gene ID" value="BT_1596"/>
</dbReference>
<dbReference type="KEGG" id="bth:BT_1596"/>
<dbReference type="PATRIC" id="fig|226186.12.peg.1634"/>
<dbReference type="eggNOG" id="COG3119">
    <property type="taxonomic scope" value="Bacteria"/>
</dbReference>
<dbReference type="HOGENOM" id="CLU_006332_9_1_10"/>
<dbReference type="InParanoid" id="Q8A7C8"/>
<dbReference type="OrthoDB" id="9762324at2"/>
<dbReference type="EvolutionaryTrace" id="Q8A7C8"/>
<dbReference type="Proteomes" id="UP000001414">
    <property type="component" value="Chromosome"/>
</dbReference>
<dbReference type="GO" id="GO:0004065">
    <property type="term" value="F:arylsulfatase activity"/>
    <property type="evidence" value="ECO:0000318"/>
    <property type="project" value="GO_Central"/>
</dbReference>
<dbReference type="GO" id="GO:0015024">
    <property type="term" value="F:glucuronate-2-sulfatase activity"/>
    <property type="evidence" value="ECO:0000318"/>
    <property type="project" value="GO_Central"/>
</dbReference>
<dbReference type="GO" id="GO:0046872">
    <property type="term" value="F:metal ion binding"/>
    <property type="evidence" value="ECO:0007669"/>
    <property type="project" value="UniProtKB-KW"/>
</dbReference>
<dbReference type="Gene3D" id="3.40.720.10">
    <property type="entry name" value="Alkaline Phosphatase, subunit A"/>
    <property type="match status" value="1"/>
</dbReference>
<dbReference type="InterPro" id="IPR017850">
    <property type="entry name" value="Alkaline_phosphatase_core_sf"/>
</dbReference>
<dbReference type="InterPro" id="IPR051849">
    <property type="entry name" value="GAG-degrading_sulfatase"/>
</dbReference>
<dbReference type="InterPro" id="IPR000917">
    <property type="entry name" value="Sulfatase_N"/>
</dbReference>
<dbReference type="PANTHER" id="PTHR46615">
    <property type="entry name" value="ARYLSULFATASE K"/>
    <property type="match status" value="1"/>
</dbReference>
<dbReference type="PANTHER" id="PTHR46615:SF1">
    <property type="entry name" value="ARYLSULFATASE K"/>
    <property type="match status" value="1"/>
</dbReference>
<dbReference type="Pfam" id="PF00884">
    <property type="entry name" value="Sulfatase"/>
    <property type="match status" value="1"/>
</dbReference>
<dbReference type="SUPFAM" id="SSF53649">
    <property type="entry name" value="Alkaline phosphatase-like"/>
    <property type="match status" value="1"/>
</dbReference>
<comment type="function">
    <text evidence="3 7">Exosulfatase involved in the degradation of the glycosaminoglycans (GAGs) chondroitin sulfate (CS), dermatan sulfate (DS) and heparan sulfate (HS). 2-O-sulfatase active on unsaturated non-reducing end hexuronate units. Has a slight preference for HS-derived structures (PubMed:25002587). GAG-specific sulfatases play a key role in the persistence of the major human gut symbiont B.thetaiotaomicron in the host gastrointestinal tract (PubMed:25002587).</text>
</comment>
<comment type="cofactor">
    <cofactor evidence="8">
        <name>Zn(2+)</name>
        <dbReference type="ChEBI" id="CHEBI:29105"/>
    </cofactor>
</comment>
<comment type="PTM">
    <text evidence="1">The conversion to 3-oxoalanine (also known as C-formylglycine, FGly), of a serine or cysteine residue in prokaryotes and of a cysteine residue in eukaryotes, is critical for catalytic activity.</text>
</comment>
<comment type="similarity">
    <text evidence="6">Belongs to the sulfatase family.</text>
</comment>
<reference key="1">
    <citation type="journal article" date="2003" name="Science">
        <title>A genomic view of the human-Bacteroides thetaiotaomicron symbiosis.</title>
        <authorList>
            <person name="Xu J."/>
            <person name="Bjursell M.K."/>
            <person name="Himrod J."/>
            <person name="Deng S."/>
            <person name="Carmichael L.K."/>
            <person name="Chiang H.C."/>
            <person name="Hooper L.V."/>
            <person name="Gordon J.I."/>
        </authorList>
    </citation>
    <scope>NUCLEOTIDE SEQUENCE [LARGE SCALE GENOMIC DNA]</scope>
    <source>
        <strain>ATCC 29148 / DSM 2079 / JCM 5827 / CCUG 10774 / NCTC 10582 / VPI-5482 / E50</strain>
    </source>
</reference>
<reference key="2">
    <citation type="journal article" date="2009" name="Proc. Natl. Acad. Sci. U.S.A.">
        <title>Characterizing a model human gut microbiota composed of members of its two dominant bacterial phyla.</title>
        <authorList>
            <person name="Mahowald M.A."/>
            <person name="Rey F.E."/>
            <person name="Seedorf H."/>
            <person name="Turnbaugh P.J."/>
            <person name="Fulton R.S."/>
            <person name="Wollam A."/>
            <person name="Shah N."/>
            <person name="Wang C."/>
            <person name="Magrini V."/>
            <person name="Wilson R.K."/>
            <person name="Cantarel B.L."/>
            <person name="Coutinho P.M."/>
            <person name="Henrissat B."/>
            <person name="Crock L.W."/>
            <person name="Russell A."/>
            <person name="Verberkmoes N.C."/>
            <person name="Hettich R.L."/>
            <person name="Gordon J.I."/>
        </authorList>
    </citation>
    <scope>NUCLEOTIDE SEQUENCE [LARGE SCALE GENOMIC DNA]</scope>
    <source>
        <strain>ATCC 29148 / DSM 2079 / JCM 5827 / CCUG 10774 / NCTC 10582 / VPI-5482 / E50</strain>
    </source>
</reference>
<reference key="3">
    <citation type="journal article" date="2014" name="J. Biol. Chem.">
        <title>Characterization of glycosaminoglycan (GAG) sulfatases from the human gut symbiont Bacteroides thetaiotaomicron reveals the first GAG-specific bacterial endosulfatase.</title>
        <authorList>
            <person name="Ulmer J.E."/>
            <person name="Vilen E.M."/>
            <person name="Namburi R.B."/>
            <person name="Benjdia A."/>
            <person name="Beneteau J."/>
            <person name="Malleron A."/>
            <person name="Bonnaffe D."/>
            <person name="Driguez P.A."/>
            <person name="Descroix K."/>
            <person name="Lassalle G."/>
            <person name="Le Narvor C."/>
            <person name="Sandstroem C."/>
            <person name="Spillmann D."/>
            <person name="Berteau O."/>
        </authorList>
    </citation>
    <scope>FUNCTION</scope>
    <scope>CATALYTIC ACTIVITY</scope>
</reference>
<reference evidence="10" key="4">
    <citation type="submission" date="2007-10" db="PDB data bank">
        <title>Crystal structure of a putative sulfatase (NP_810509.1) from Bacteroides thetaiotaomicron VPI-5482 at 2.40 A resolution.</title>
        <authorList>
            <consortium name="Joint Center for Structural Genomics (JCSG)"/>
        </authorList>
    </citation>
    <scope>X-RAY CRYSTALLOGRAPHY (2.40 ANGSTROMS) IN COMPLEX WITH ZINC</scope>
    <source>
        <strain>ATCC 29148 / DSM 2079 / JCM 5827 / CCUG 10774 / NCTC 10582 / VPI-5482 / E50</strain>
    </source>
</reference>
<reference evidence="11 12" key="5">
    <citation type="submission" date="2016-04" db="PDB data bank">
        <title>Metabolism of host GAGs by the human gut bacterium Bacteroides thetaiotaomicron.</title>
        <authorList>
            <person name="Cartmell A."/>
            <person name="Lowe E.C."/>
            <person name="Basle A."/>
            <person name="Crouch L.I."/>
            <person name="Czjzek M."/>
            <person name="Turnbull J."/>
            <person name="Henrissat B."/>
            <person name="Terrapon N."/>
            <person name="Thomas S."/>
            <person name="Murray H."/>
            <person name="Firbank S.J."/>
            <person name="Bolam D.N."/>
        </authorList>
    </citation>
    <scope>X-RAY CRYSTALLOGRAPHY (1.43 ANGSTROMS) OF 13-481</scope>
</reference>
<keyword id="KW-0002">3D-structure</keyword>
<keyword id="KW-0378">Hydrolase</keyword>
<keyword id="KW-0479">Metal-binding</keyword>
<keyword id="KW-1185">Reference proteome</keyword>
<keyword id="KW-0862">Zinc</keyword>
<accession>Q8A7C8</accession>
<proteinExistence type="evidence at protein level"/>
<protein>
    <recommendedName>
        <fullName evidence="5">Delta 4,5-hexuronate-2-O-sulfatase</fullName>
        <ecNumber evidence="3">3.1.6.-</ecNumber>
    </recommendedName>
</protein>
<feature type="chain" id="PRO_0000446229" description="Delta 4,5-hexuronate-2-O-sulfatase">
    <location>
        <begin position="1"/>
        <end position="481"/>
    </location>
</feature>
<feature type="region of interest" description="Disordered" evidence="2">
    <location>
        <begin position="453"/>
        <end position="481"/>
    </location>
</feature>
<feature type="compositionally biased region" description="Basic and acidic residues" evidence="2">
    <location>
        <begin position="472"/>
        <end position="481"/>
    </location>
</feature>
<feature type="binding site" evidence="4 10">
    <location>
        <position position="225"/>
    </location>
    <ligand>
        <name>Zn(2+)</name>
        <dbReference type="ChEBI" id="CHEBI:29105"/>
    </ligand>
</feature>
<feature type="binding site" evidence="4 10">
    <location>
        <position position="226"/>
    </location>
    <ligand>
        <name>Zn(2+)</name>
        <dbReference type="ChEBI" id="CHEBI:29105"/>
    </ligand>
</feature>
<feature type="binding site" evidence="4 10">
    <location>
        <position position="462"/>
    </location>
    <ligand>
        <name>Zn(2+)</name>
        <dbReference type="ChEBI" id="CHEBI:29105"/>
    </ligand>
</feature>
<feature type="binding site" evidence="4 10">
    <location>
        <position position="469"/>
    </location>
    <ligand>
        <name>Zn(2+)</name>
        <dbReference type="ChEBI" id="CHEBI:29105"/>
    </ligand>
</feature>
<feature type="modified residue" description="3-oxoalanine (Ser)" evidence="1">
    <location>
        <position position="64"/>
    </location>
</feature>
<feature type="strand" evidence="13">
    <location>
        <begin position="17"/>
        <end position="23"/>
    </location>
</feature>
<feature type="turn" evidence="13">
    <location>
        <begin position="28"/>
        <end position="30"/>
    </location>
</feature>
<feature type="helix" evidence="13">
    <location>
        <begin position="32"/>
        <end position="34"/>
    </location>
</feature>
<feature type="helix" evidence="13">
    <location>
        <begin position="42"/>
        <end position="49"/>
    </location>
</feature>
<feature type="strand" evidence="13">
    <location>
        <begin position="51"/>
        <end position="55"/>
    </location>
</feature>
<feature type="helix" evidence="13">
    <location>
        <begin position="64"/>
        <end position="73"/>
    </location>
</feature>
<feature type="helix" evidence="13">
    <location>
        <begin position="77"/>
        <end position="80"/>
    </location>
</feature>
<feature type="turn" evidence="13">
    <location>
        <begin position="88"/>
        <end position="90"/>
    </location>
</feature>
<feature type="helix" evidence="13">
    <location>
        <begin position="101"/>
        <end position="107"/>
    </location>
</feature>
<feature type="strand" evidence="13">
    <location>
        <begin position="111"/>
        <end position="116"/>
    </location>
</feature>
<feature type="turn" evidence="13">
    <location>
        <begin position="121"/>
        <end position="126"/>
    </location>
</feature>
<feature type="strand" evidence="13">
    <location>
        <begin position="127"/>
        <end position="130"/>
    </location>
</feature>
<feature type="strand" evidence="13">
    <location>
        <begin position="140"/>
        <end position="142"/>
    </location>
</feature>
<feature type="helix" evidence="13">
    <location>
        <begin position="146"/>
        <end position="163"/>
    </location>
</feature>
<feature type="strand" evidence="13">
    <location>
        <begin position="170"/>
        <end position="176"/>
    </location>
</feature>
<feature type="turn" evidence="13">
    <location>
        <begin position="178"/>
        <end position="181"/>
    </location>
</feature>
<feature type="helix" evidence="13">
    <location>
        <begin position="182"/>
        <end position="188"/>
    </location>
</feature>
<feature type="helix" evidence="13">
    <location>
        <begin position="214"/>
        <end position="216"/>
    </location>
</feature>
<feature type="helix" evidence="13">
    <location>
        <begin position="219"/>
        <end position="222"/>
    </location>
</feature>
<feature type="helix" evidence="13">
    <location>
        <begin position="224"/>
        <end position="227"/>
    </location>
</feature>
<feature type="helix" evidence="13">
    <location>
        <begin position="229"/>
        <end position="234"/>
    </location>
</feature>
<feature type="helix" evidence="13">
    <location>
        <begin position="239"/>
        <end position="267"/>
    </location>
</feature>
<feature type="helix" evidence="13">
    <location>
        <begin position="273"/>
        <end position="275"/>
    </location>
</feature>
<feature type="strand" evidence="13">
    <location>
        <begin position="276"/>
        <end position="281"/>
    </location>
</feature>
<feature type="helix" evidence="13">
    <location>
        <begin position="290"/>
        <end position="292"/>
    </location>
</feature>
<feature type="helix" evidence="13">
    <location>
        <begin position="302"/>
        <end position="305"/>
    </location>
</feature>
<feature type="strand" evidence="13">
    <location>
        <begin position="309"/>
        <end position="313"/>
    </location>
</feature>
<feature type="helix" evidence="13">
    <location>
        <begin position="330"/>
        <end position="342"/>
    </location>
</feature>
<feature type="helix" evidence="13">
    <location>
        <begin position="356"/>
        <end position="360"/>
    </location>
</feature>
<feature type="strand" evidence="13">
    <location>
        <begin position="371"/>
        <end position="390"/>
    </location>
</feature>
<feature type="strand" evidence="13">
    <location>
        <begin position="392"/>
        <end position="399"/>
    </location>
</feature>
<feature type="helix" evidence="13">
    <location>
        <begin position="401"/>
        <end position="403"/>
    </location>
</feature>
<feature type="strand" evidence="13">
    <location>
        <begin position="404"/>
        <end position="409"/>
    </location>
</feature>
<feature type="turn" evidence="13">
    <location>
        <begin position="410"/>
        <end position="412"/>
    </location>
</feature>
<feature type="helix" evidence="13">
    <location>
        <begin position="424"/>
        <end position="426"/>
    </location>
</feature>
<feature type="helix" evidence="13">
    <location>
        <begin position="427"/>
        <end position="443"/>
    </location>
</feature>
<feature type="helix" evidence="13">
    <location>
        <begin position="448"/>
        <end position="450"/>
    </location>
</feature>
<feature type="helix" evidence="13">
    <location>
        <begin position="457"/>
        <end position="459"/>
    </location>
</feature>
<feature type="strand" evidence="13">
    <location>
        <begin position="462"/>
        <end position="465"/>
    </location>
</feature>
<feature type="helix" evidence="13">
    <location>
        <begin position="466"/>
        <end position="468"/>
    </location>
</feature>
<feature type="helix" evidence="13">
    <location>
        <begin position="474"/>
        <end position="477"/>
    </location>
</feature>
<sequence length="481" mass="53650">MGLALCGAAAQAQEKPNFLIIQCDHLTQRVVGAYGQTQGCTLPIDEVASRGVIFSNAYVGCPLSQPSRAALWSGMMPHQTNVRSNSSEPVNTRLPENVPTLGSLFSESGYEAVHFGKTHDMGSLRGFKHKEPVAKPFTDPEFPVNNDSFLDVGTCEDAVAYLSNPPKEPFICIADFQNPHNICGFIGENAGVHTDRPISGPLPELPDNFDVEDWSNIPTPVQYICCSHRRMTQAAHWNEENYRHYIAAFQHYTKMVSKQVDSVLKALYSTPAGRNTIVVIMADHGDGMASHRMVTKHISFYDEMTNVPFIFAGPGIKQQKKPVDHLLTQPTLDLLPTLCDLAGIAVPAEKAGISLAPTLRGEKQKKSHPYVVSEWHSEYEYVTTPGRMVRGPRYKYTHYLEGNGEELYDMKKDPGERKNLAKDPKYSKILAEHRALLDDYITRSKDDYRSLKVDADPRCRNHTPGYPSHEGPGAREILKRK</sequence>
<gene>
    <name evidence="9" type="ordered locus">BT_1596</name>
</gene>
<name>HEXSF_BACTN</name>